<comment type="similarity">
    <text evidence="1">Belongs to the bacterial ribosomal protein bL27 family.</text>
</comment>
<organism>
    <name type="scientific">Salmonella gallinarum (strain 287/91 / NCTC 13346)</name>
    <dbReference type="NCBI Taxonomy" id="550538"/>
    <lineage>
        <taxon>Bacteria</taxon>
        <taxon>Pseudomonadati</taxon>
        <taxon>Pseudomonadota</taxon>
        <taxon>Gammaproteobacteria</taxon>
        <taxon>Enterobacterales</taxon>
        <taxon>Enterobacteriaceae</taxon>
        <taxon>Salmonella</taxon>
    </lineage>
</organism>
<name>RL27_SALG2</name>
<proteinExistence type="inferred from homology"/>
<accession>B5REQ1</accession>
<sequence>MAHKKAGGSTRNGRDSEAKRLGVKRFGGEAVLAGSIIVRQRGTKFHAGTNVGCGRDHTLFAKADGKVKFEVKGPKNRKYISIVAE</sequence>
<protein>
    <recommendedName>
        <fullName evidence="1">Large ribosomal subunit protein bL27</fullName>
    </recommendedName>
    <alternativeName>
        <fullName evidence="3">50S ribosomal protein L27</fullName>
    </alternativeName>
</protein>
<keyword id="KW-0687">Ribonucleoprotein</keyword>
<keyword id="KW-0689">Ribosomal protein</keyword>
<reference key="1">
    <citation type="journal article" date="2008" name="Genome Res.">
        <title>Comparative genome analysis of Salmonella enteritidis PT4 and Salmonella gallinarum 287/91 provides insights into evolutionary and host adaptation pathways.</title>
        <authorList>
            <person name="Thomson N.R."/>
            <person name="Clayton D.J."/>
            <person name="Windhorst D."/>
            <person name="Vernikos G."/>
            <person name="Davidson S."/>
            <person name="Churcher C."/>
            <person name="Quail M.A."/>
            <person name="Stevens M."/>
            <person name="Jones M.A."/>
            <person name="Watson M."/>
            <person name="Barron A."/>
            <person name="Layton A."/>
            <person name="Pickard D."/>
            <person name="Kingsley R.A."/>
            <person name="Bignell A."/>
            <person name="Clark L."/>
            <person name="Harris B."/>
            <person name="Ormond D."/>
            <person name="Abdellah Z."/>
            <person name="Brooks K."/>
            <person name="Cherevach I."/>
            <person name="Chillingworth T."/>
            <person name="Woodward J."/>
            <person name="Norberczak H."/>
            <person name="Lord A."/>
            <person name="Arrowsmith C."/>
            <person name="Jagels K."/>
            <person name="Moule S."/>
            <person name="Mungall K."/>
            <person name="Saunders M."/>
            <person name="Whitehead S."/>
            <person name="Chabalgoity J.A."/>
            <person name="Maskell D."/>
            <person name="Humphreys T."/>
            <person name="Roberts M."/>
            <person name="Barrow P.A."/>
            <person name="Dougan G."/>
            <person name="Parkhill J."/>
        </authorList>
    </citation>
    <scope>NUCLEOTIDE SEQUENCE [LARGE SCALE GENOMIC DNA]</scope>
    <source>
        <strain>287/91 / NCTC 13346</strain>
    </source>
</reference>
<dbReference type="EMBL" id="AM933173">
    <property type="protein sequence ID" value="CAR38991.1"/>
    <property type="molecule type" value="Genomic_DNA"/>
</dbReference>
<dbReference type="RefSeq" id="WP_000940593.1">
    <property type="nucleotide sequence ID" value="NC_011274.1"/>
</dbReference>
<dbReference type="SMR" id="B5REQ1"/>
<dbReference type="GeneID" id="66757642"/>
<dbReference type="KEGG" id="seg:SG3193"/>
<dbReference type="HOGENOM" id="CLU_095424_4_1_6"/>
<dbReference type="Proteomes" id="UP000008321">
    <property type="component" value="Chromosome"/>
</dbReference>
<dbReference type="GO" id="GO:0022625">
    <property type="term" value="C:cytosolic large ribosomal subunit"/>
    <property type="evidence" value="ECO:0007669"/>
    <property type="project" value="TreeGrafter"/>
</dbReference>
<dbReference type="GO" id="GO:0003735">
    <property type="term" value="F:structural constituent of ribosome"/>
    <property type="evidence" value="ECO:0007669"/>
    <property type="project" value="InterPro"/>
</dbReference>
<dbReference type="GO" id="GO:0006412">
    <property type="term" value="P:translation"/>
    <property type="evidence" value="ECO:0007669"/>
    <property type="project" value="UniProtKB-UniRule"/>
</dbReference>
<dbReference type="FunFam" id="2.40.50.100:FF:000001">
    <property type="entry name" value="50S ribosomal protein L27"/>
    <property type="match status" value="1"/>
</dbReference>
<dbReference type="Gene3D" id="2.40.50.100">
    <property type="match status" value="1"/>
</dbReference>
<dbReference type="HAMAP" id="MF_00539">
    <property type="entry name" value="Ribosomal_bL27"/>
    <property type="match status" value="1"/>
</dbReference>
<dbReference type="InterPro" id="IPR001684">
    <property type="entry name" value="Ribosomal_bL27"/>
</dbReference>
<dbReference type="InterPro" id="IPR018261">
    <property type="entry name" value="Ribosomal_bL27_CS"/>
</dbReference>
<dbReference type="NCBIfam" id="TIGR00062">
    <property type="entry name" value="L27"/>
    <property type="match status" value="1"/>
</dbReference>
<dbReference type="PANTHER" id="PTHR15893:SF0">
    <property type="entry name" value="LARGE RIBOSOMAL SUBUNIT PROTEIN BL27M"/>
    <property type="match status" value="1"/>
</dbReference>
<dbReference type="PANTHER" id="PTHR15893">
    <property type="entry name" value="RIBOSOMAL PROTEIN L27"/>
    <property type="match status" value="1"/>
</dbReference>
<dbReference type="Pfam" id="PF01016">
    <property type="entry name" value="Ribosomal_L27"/>
    <property type="match status" value="1"/>
</dbReference>
<dbReference type="PRINTS" id="PR00063">
    <property type="entry name" value="RIBOSOMALL27"/>
</dbReference>
<dbReference type="SUPFAM" id="SSF110324">
    <property type="entry name" value="Ribosomal L27 protein-like"/>
    <property type="match status" value="1"/>
</dbReference>
<dbReference type="PROSITE" id="PS00831">
    <property type="entry name" value="RIBOSOMAL_L27"/>
    <property type="match status" value="1"/>
</dbReference>
<gene>
    <name evidence="1" type="primary">rpmA</name>
    <name type="ordered locus">SG3193</name>
</gene>
<evidence type="ECO:0000255" key="1">
    <source>
        <dbReference type="HAMAP-Rule" id="MF_00539"/>
    </source>
</evidence>
<evidence type="ECO:0000256" key="2">
    <source>
        <dbReference type="SAM" id="MobiDB-lite"/>
    </source>
</evidence>
<evidence type="ECO:0000305" key="3"/>
<feature type="chain" id="PRO_1000128803" description="Large ribosomal subunit protein bL27">
    <location>
        <begin position="1"/>
        <end position="85"/>
    </location>
</feature>
<feature type="region of interest" description="Disordered" evidence="2">
    <location>
        <begin position="1"/>
        <end position="20"/>
    </location>
</feature>